<gene>
    <name type="ORF">IIV3-003L</name>
</gene>
<feature type="chain" id="PRO_0000377939" description="Uncharacterized protein 003L">
    <location>
        <begin position="1"/>
        <end position="156"/>
    </location>
</feature>
<keyword id="KW-1185">Reference proteome</keyword>
<proteinExistence type="predicted"/>
<organismHost>
    <name type="scientific">Aedes vexans</name>
    <name type="common">Inland floodwater mosquito</name>
    <name type="synonym">Culex vexans</name>
    <dbReference type="NCBI Taxonomy" id="7163"/>
</organismHost>
<organismHost>
    <name type="scientific">Culex territans</name>
    <dbReference type="NCBI Taxonomy" id="42431"/>
</organismHost>
<organismHost>
    <name type="scientific">Culiseta annulata</name>
    <dbReference type="NCBI Taxonomy" id="332058"/>
</organismHost>
<organismHost>
    <name type="scientific">Ochlerotatus sollicitans</name>
    <name type="common">eastern saltmarsh mosquito</name>
    <dbReference type="NCBI Taxonomy" id="310513"/>
</organismHost>
<organismHost>
    <name type="scientific">Ochlerotatus taeniorhynchus</name>
    <name type="common">Black salt marsh mosquito</name>
    <name type="synonym">Aedes taeniorhynchus</name>
    <dbReference type="NCBI Taxonomy" id="329105"/>
</organismHost>
<organismHost>
    <name type="scientific">Psorophora ferox</name>
    <dbReference type="NCBI Taxonomy" id="7183"/>
</organismHost>
<sequence length="156" mass="17043">MYQAINPCPQSWYGSPQLEREIVCKMSGAPHYPNYYPVHPNALGGAWFDTSLNARSLTTTPSLTTCTPPSLAACTPPTSLGMVDSPPHINPPRRIGTLCFDFGSAKSPQRCECVASDRPSTTSNTAPDTYRLLITNSKTRKNNYGTCRLEPLTYGI</sequence>
<organism>
    <name type="scientific">Invertebrate iridescent virus 3</name>
    <name type="common">IIV-3</name>
    <name type="synonym">Mosquito iridescent virus</name>
    <dbReference type="NCBI Taxonomy" id="345201"/>
    <lineage>
        <taxon>Viruses</taxon>
        <taxon>Varidnaviria</taxon>
        <taxon>Bamfordvirae</taxon>
        <taxon>Nucleocytoviricota</taxon>
        <taxon>Megaviricetes</taxon>
        <taxon>Pimascovirales</taxon>
        <taxon>Iridoviridae</taxon>
        <taxon>Betairidovirinae</taxon>
        <taxon>Chloriridovirus</taxon>
    </lineage>
</organism>
<protein>
    <recommendedName>
        <fullName>Uncharacterized protein 003L</fullName>
    </recommendedName>
</protein>
<dbReference type="EMBL" id="DQ643392">
    <property type="protein sequence ID" value="ABF82033.1"/>
    <property type="molecule type" value="Genomic_DNA"/>
</dbReference>
<dbReference type="RefSeq" id="YP_654575.1">
    <property type="nucleotide sequence ID" value="NC_008187.1"/>
</dbReference>
<dbReference type="KEGG" id="vg:4156252"/>
<dbReference type="Proteomes" id="UP000001358">
    <property type="component" value="Genome"/>
</dbReference>
<accession>Q197F7</accession>
<reference key="1">
    <citation type="journal article" date="2006" name="J. Virol.">
        <title>Genome of invertebrate iridescent virus type 3 (mosquito iridescent virus).</title>
        <authorList>
            <person name="Delhon G."/>
            <person name="Tulman E.R."/>
            <person name="Afonso C.L."/>
            <person name="Lu Z."/>
            <person name="Becnel J.J."/>
            <person name="Moser B.A."/>
            <person name="Kutish G.F."/>
            <person name="Rock D.L."/>
        </authorList>
    </citation>
    <scope>NUCLEOTIDE SEQUENCE [LARGE SCALE GENOMIC DNA]</scope>
</reference>
<name>003L_IIV3</name>